<proteinExistence type="inferred from homology"/>
<organism>
    <name type="scientific">Picosynechococcus sp. (strain ATCC 27264 / PCC 7002 / PR-6)</name>
    <name type="common">Agmenellum quadruplicatum</name>
    <dbReference type="NCBI Taxonomy" id="32049"/>
    <lineage>
        <taxon>Bacteria</taxon>
        <taxon>Bacillati</taxon>
        <taxon>Cyanobacteriota</taxon>
        <taxon>Cyanophyceae</taxon>
        <taxon>Oscillatoriophycideae</taxon>
        <taxon>Chroococcales</taxon>
        <taxon>Geminocystaceae</taxon>
        <taxon>Picosynechococcus</taxon>
    </lineage>
</organism>
<dbReference type="EC" id="2.1.1.74" evidence="1"/>
<dbReference type="EMBL" id="CP000951">
    <property type="protein sequence ID" value="ACB00372.1"/>
    <property type="molecule type" value="Genomic_DNA"/>
</dbReference>
<dbReference type="RefSeq" id="WP_012307990.1">
    <property type="nucleotide sequence ID" value="NZ_JAHHPU010000003.1"/>
</dbReference>
<dbReference type="SMR" id="B1XK17"/>
<dbReference type="STRING" id="32049.SYNPCC7002_A2394"/>
<dbReference type="KEGG" id="syp:SYNPCC7002_A2394"/>
<dbReference type="eggNOG" id="COG1206">
    <property type="taxonomic scope" value="Bacteria"/>
</dbReference>
<dbReference type="HOGENOM" id="CLU_033057_1_0_3"/>
<dbReference type="Proteomes" id="UP000001688">
    <property type="component" value="Chromosome"/>
</dbReference>
<dbReference type="GO" id="GO:0005829">
    <property type="term" value="C:cytosol"/>
    <property type="evidence" value="ECO:0007669"/>
    <property type="project" value="TreeGrafter"/>
</dbReference>
<dbReference type="GO" id="GO:0050660">
    <property type="term" value="F:flavin adenine dinucleotide binding"/>
    <property type="evidence" value="ECO:0007669"/>
    <property type="project" value="UniProtKB-UniRule"/>
</dbReference>
<dbReference type="GO" id="GO:0047151">
    <property type="term" value="F:tRNA (uracil(54)-C5)-methyltransferase activity, 5,10-methylenetetrahydrofolate-dependent"/>
    <property type="evidence" value="ECO:0007669"/>
    <property type="project" value="UniProtKB-UniRule"/>
</dbReference>
<dbReference type="GO" id="GO:0030488">
    <property type="term" value="P:tRNA methylation"/>
    <property type="evidence" value="ECO:0007669"/>
    <property type="project" value="TreeGrafter"/>
</dbReference>
<dbReference type="GO" id="GO:0002098">
    <property type="term" value="P:tRNA wobble uridine modification"/>
    <property type="evidence" value="ECO:0007669"/>
    <property type="project" value="TreeGrafter"/>
</dbReference>
<dbReference type="FunFam" id="3.50.50.60:FF:000035">
    <property type="entry name" value="Methylenetetrahydrofolate--tRNA-(uracil-5-)-methyltransferase TrmFO"/>
    <property type="match status" value="1"/>
</dbReference>
<dbReference type="Gene3D" id="3.50.50.60">
    <property type="entry name" value="FAD/NAD(P)-binding domain"/>
    <property type="match status" value="2"/>
</dbReference>
<dbReference type="HAMAP" id="MF_01037">
    <property type="entry name" value="TrmFO"/>
    <property type="match status" value="1"/>
</dbReference>
<dbReference type="InterPro" id="IPR036188">
    <property type="entry name" value="FAD/NAD-bd_sf"/>
</dbReference>
<dbReference type="InterPro" id="IPR002218">
    <property type="entry name" value="MnmG-rel"/>
</dbReference>
<dbReference type="InterPro" id="IPR020595">
    <property type="entry name" value="MnmG-rel_CS"/>
</dbReference>
<dbReference type="InterPro" id="IPR040131">
    <property type="entry name" value="MnmG_N"/>
</dbReference>
<dbReference type="InterPro" id="IPR004417">
    <property type="entry name" value="TrmFO"/>
</dbReference>
<dbReference type="NCBIfam" id="TIGR00137">
    <property type="entry name" value="gid_trmFO"/>
    <property type="match status" value="1"/>
</dbReference>
<dbReference type="NCBIfam" id="NF003739">
    <property type="entry name" value="PRK05335.1"/>
    <property type="match status" value="1"/>
</dbReference>
<dbReference type="PANTHER" id="PTHR11806">
    <property type="entry name" value="GLUCOSE INHIBITED DIVISION PROTEIN A"/>
    <property type="match status" value="1"/>
</dbReference>
<dbReference type="PANTHER" id="PTHR11806:SF2">
    <property type="entry name" value="METHYLENETETRAHYDROFOLATE--TRNA-(URACIL-5-)-METHYLTRANSFERASE TRMFO"/>
    <property type="match status" value="1"/>
</dbReference>
<dbReference type="Pfam" id="PF01134">
    <property type="entry name" value="GIDA"/>
    <property type="match status" value="1"/>
</dbReference>
<dbReference type="PRINTS" id="PR00411">
    <property type="entry name" value="PNDRDTASEI"/>
</dbReference>
<dbReference type="SUPFAM" id="SSF51905">
    <property type="entry name" value="FAD/NAD(P)-binding domain"/>
    <property type="match status" value="1"/>
</dbReference>
<dbReference type="PROSITE" id="PS01281">
    <property type="entry name" value="GIDA_2"/>
    <property type="match status" value="1"/>
</dbReference>
<feature type="chain" id="PRO_0000346404" description="Methylenetetrahydrofolate--tRNA-(uracil-5-)-methyltransferase TrmFO">
    <location>
        <begin position="1"/>
        <end position="456"/>
    </location>
</feature>
<feature type="binding site" evidence="1">
    <location>
        <begin position="12"/>
        <end position="17"/>
    </location>
    <ligand>
        <name>FAD</name>
        <dbReference type="ChEBI" id="CHEBI:57692"/>
    </ligand>
</feature>
<name>TRMFO_PICP2</name>
<evidence type="ECO:0000255" key="1">
    <source>
        <dbReference type="HAMAP-Rule" id="MF_01037"/>
    </source>
</evidence>
<keyword id="KW-0963">Cytoplasm</keyword>
<keyword id="KW-0274">FAD</keyword>
<keyword id="KW-0285">Flavoprotein</keyword>
<keyword id="KW-0489">Methyltransferase</keyword>
<keyword id="KW-0520">NAD</keyword>
<keyword id="KW-0521">NADP</keyword>
<keyword id="KW-1185">Reference proteome</keyword>
<keyword id="KW-0808">Transferase</keyword>
<keyword id="KW-0819">tRNA processing</keyword>
<sequence>MTKTLPPVTVIGGGLAGTEAAWQIAQAGVPVTLYEMRPVQKSPAHHTADLAELVCSNSFGAASSDRAAGLLHEELRRLQSVIISTADQHRVPAGGALAVDRGVFSQDLTQKLAEHPLVTFRREPLDQIPSEGITVLATGPLTTAALATELQQFTGLEYMSFFDAASPIIVGESINQDIAFLASRYDKGEAAYLNCPMDPAQYQAFRAALCEAEQAELKDFELETAKFFEGCLPIEELARRGEDTMRFGPLKPVGLFDARLGDFRAPENKGKRPYAVVQLRQEDKQGQLWNMVGFQTNLRWGEQKRVFRMIPGLENAEFVRMGVMHRNTFLNSPELLEATLQFKKRPTLLAAGQLIGTEGYTAAAAGGWLAGTNAARLAQGLTPLTLPETTMMGALFEFIHSASPKHFQPMPPNFGIIPPLAERVRSKKERYGVYRDRSLTDLEQWREESCRPAALV</sequence>
<gene>
    <name evidence="1" type="primary">trmFO</name>
    <name type="ordered locus">SYNPCC7002_A2394</name>
</gene>
<comment type="function">
    <text evidence="1">Catalyzes the folate-dependent formation of 5-methyl-uridine at position 54 (M-5-U54) in all tRNAs.</text>
</comment>
<comment type="catalytic activity">
    <reaction evidence="1">
        <text>uridine(54) in tRNA + (6R)-5,10-methylene-5,6,7,8-tetrahydrofolate + NADH + H(+) = 5-methyluridine(54) in tRNA + (6S)-5,6,7,8-tetrahydrofolate + NAD(+)</text>
        <dbReference type="Rhea" id="RHEA:16873"/>
        <dbReference type="Rhea" id="RHEA-COMP:10167"/>
        <dbReference type="Rhea" id="RHEA-COMP:10193"/>
        <dbReference type="ChEBI" id="CHEBI:15378"/>
        <dbReference type="ChEBI" id="CHEBI:15636"/>
        <dbReference type="ChEBI" id="CHEBI:57453"/>
        <dbReference type="ChEBI" id="CHEBI:57540"/>
        <dbReference type="ChEBI" id="CHEBI:57945"/>
        <dbReference type="ChEBI" id="CHEBI:65315"/>
        <dbReference type="ChEBI" id="CHEBI:74447"/>
        <dbReference type="EC" id="2.1.1.74"/>
    </reaction>
</comment>
<comment type="catalytic activity">
    <reaction evidence="1">
        <text>uridine(54) in tRNA + (6R)-5,10-methylene-5,6,7,8-tetrahydrofolate + NADPH + H(+) = 5-methyluridine(54) in tRNA + (6S)-5,6,7,8-tetrahydrofolate + NADP(+)</text>
        <dbReference type="Rhea" id="RHEA:62372"/>
        <dbReference type="Rhea" id="RHEA-COMP:10167"/>
        <dbReference type="Rhea" id="RHEA-COMP:10193"/>
        <dbReference type="ChEBI" id="CHEBI:15378"/>
        <dbReference type="ChEBI" id="CHEBI:15636"/>
        <dbReference type="ChEBI" id="CHEBI:57453"/>
        <dbReference type="ChEBI" id="CHEBI:57783"/>
        <dbReference type="ChEBI" id="CHEBI:58349"/>
        <dbReference type="ChEBI" id="CHEBI:65315"/>
        <dbReference type="ChEBI" id="CHEBI:74447"/>
        <dbReference type="EC" id="2.1.1.74"/>
    </reaction>
</comment>
<comment type="cofactor">
    <cofactor evidence="1">
        <name>FAD</name>
        <dbReference type="ChEBI" id="CHEBI:57692"/>
    </cofactor>
</comment>
<comment type="subcellular location">
    <subcellularLocation>
        <location evidence="1">Cytoplasm</location>
    </subcellularLocation>
</comment>
<comment type="similarity">
    <text evidence="1">Belongs to the MnmG family. TrmFO subfamily.</text>
</comment>
<accession>B1XK17</accession>
<protein>
    <recommendedName>
        <fullName evidence="1">Methylenetetrahydrofolate--tRNA-(uracil-5-)-methyltransferase TrmFO</fullName>
        <ecNumber evidence="1">2.1.1.74</ecNumber>
    </recommendedName>
    <alternativeName>
        <fullName evidence="1">Folate-dependent tRNA (uracil-5-)-methyltransferase</fullName>
    </alternativeName>
    <alternativeName>
        <fullName evidence="1">Folate-dependent tRNA(M-5-U54)-methyltransferase</fullName>
    </alternativeName>
</protein>
<reference key="1">
    <citation type="submission" date="2008-02" db="EMBL/GenBank/DDBJ databases">
        <title>Complete sequence of Synechococcus sp. PCC 7002.</title>
        <authorList>
            <person name="Li T."/>
            <person name="Zhao J."/>
            <person name="Zhao C."/>
            <person name="Liu Z."/>
            <person name="Zhao F."/>
            <person name="Marquardt J."/>
            <person name="Nomura C.T."/>
            <person name="Persson S."/>
            <person name="Detter J.C."/>
            <person name="Richardson P.M."/>
            <person name="Lanz C."/>
            <person name="Schuster S.C."/>
            <person name="Wang J."/>
            <person name="Li S."/>
            <person name="Huang X."/>
            <person name="Cai T."/>
            <person name="Yu Z."/>
            <person name="Luo J."/>
            <person name="Zhao J."/>
            <person name="Bryant D.A."/>
        </authorList>
    </citation>
    <scope>NUCLEOTIDE SEQUENCE [LARGE SCALE GENOMIC DNA]</scope>
    <source>
        <strain>ATCC 27264 / PCC 7002 / PR-6</strain>
    </source>
</reference>